<evidence type="ECO:0000255" key="1"/>
<evidence type="ECO:0000269" key="2">
    <source>
    </source>
</evidence>
<evidence type="ECO:0000269" key="3">
    <source>
    </source>
</evidence>
<evidence type="ECO:0000303" key="4">
    <source>
    </source>
</evidence>
<evidence type="ECO:0000305" key="5"/>
<evidence type="ECO:0000305" key="6">
    <source>
    </source>
</evidence>
<evidence type="ECO:0000305" key="7">
    <source>
    </source>
</evidence>
<evidence type="ECO:0000312" key="8">
    <source>
        <dbReference type="EMBL" id="ACU30740.1"/>
    </source>
</evidence>
<feature type="signal peptide" evidence="1">
    <location>
        <begin position="1"/>
        <end position="25"/>
    </location>
</feature>
<feature type="propeptide" id="PRO_0000390689" evidence="5">
    <location>
        <begin position="26"/>
        <end position="51"/>
    </location>
</feature>
<feature type="peptide" id="PRO_5000502625" description="Venom peptide 3" evidence="2">
    <location>
        <begin position="52"/>
        <end position="65"/>
    </location>
</feature>
<feature type="repeat" description="AXPX 1" evidence="5">
    <location>
        <begin position="25"/>
        <end position="28"/>
    </location>
</feature>
<feature type="repeat" description="AXPX 2" evidence="5">
    <location>
        <begin position="33"/>
        <end position="36"/>
    </location>
</feature>
<feature type="repeat" description="AXPX 3" evidence="5">
    <location>
        <begin position="37"/>
        <end position="40"/>
    </location>
</feature>
<feature type="repeat" description="AXPX 4" evidence="5">
    <location>
        <begin position="41"/>
        <end position="44"/>
    </location>
</feature>
<feature type="repeat" description="AXPX 5" evidence="5">
    <location>
        <begin position="47"/>
        <end position="50"/>
    </location>
</feature>
<feature type="modified residue" description="Leucine amide" evidence="2">
    <location>
        <position position="65"/>
    </location>
</feature>
<keyword id="KW-0027">Amidation</keyword>
<keyword id="KW-0929">Antimicrobial</keyword>
<keyword id="KW-0204">Cytolysis</keyword>
<keyword id="KW-0295">Fungicide</keyword>
<keyword id="KW-0391">Immunity</keyword>
<keyword id="KW-0399">Innate immunity</keyword>
<keyword id="KW-0472">Membrane</keyword>
<keyword id="KW-0677">Repeat</keyword>
<keyword id="KW-0964">Secreted</keyword>
<keyword id="KW-0732">Signal</keyword>
<keyword id="KW-1052">Target cell membrane</keyword>
<keyword id="KW-1053">Target membrane</keyword>
<keyword id="KW-0800">Toxin</keyword>
<dbReference type="EMBL" id="GQ205582">
    <property type="protein sequence ID" value="ACU30740.1"/>
    <property type="molecule type" value="mRNA"/>
</dbReference>
<dbReference type="GO" id="GO:0005576">
    <property type="term" value="C:extracellular region"/>
    <property type="evidence" value="ECO:0000314"/>
    <property type="project" value="UniProtKB"/>
</dbReference>
<dbReference type="GO" id="GO:0016020">
    <property type="term" value="C:membrane"/>
    <property type="evidence" value="ECO:0007669"/>
    <property type="project" value="UniProtKB-KW"/>
</dbReference>
<dbReference type="GO" id="GO:0044218">
    <property type="term" value="C:other organism cell membrane"/>
    <property type="evidence" value="ECO:0007669"/>
    <property type="project" value="UniProtKB-KW"/>
</dbReference>
<dbReference type="GO" id="GO:0090729">
    <property type="term" value="F:toxin activity"/>
    <property type="evidence" value="ECO:0007669"/>
    <property type="project" value="UniProtKB-KW"/>
</dbReference>
<dbReference type="GO" id="GO:0050832">
    <property type="term" value="P:defense response to fungus"/>
    <property type="evidence" value="ECO:0007669"/>
    <property type="project" value="UniProtKB-KW"/>
</dbReference>
<dbReference type="GO" id="GO:0045087">
    <property type="term" value="P:innate immune response"/>
    <property type="evidence" value="ECO:0007669"/>
    <property type="project" value="UniProtKB-KW"/>
</dbReference>
<dbReference type="GO" id="GO:0031640">
    <property type="term" value="P:killing of cells of another organism"/>
    <property type="evidence" value="ECO:0007669"/>
    <property type="project" value="UniProtKB-KW"/>
</dbReference>
<protein>
    <recommendedName>
        <fullName evidence="6 8">Venom peptide 3</fullName>
        <shortName evidence="4">OdVP3</shortName>
        <shortName evidence="8">VP3</shortName>
    </recommendedName>
</protein>
<sequence length="68" mass="7111">MTKQSIVIVLFAAIAMMACLQRVTAEPAPEPIAAPIAEPYANPEAIASPEAKDLHTVVSAILQALGKK</sequence>
<accession>C7DT09</accession>
<proteinExistence type="evidence at protein level"/>
<reference key="1">
    <citation type="journal article" date="2010" name="Toxicon">
        <title>Isolation and molecular cloning of venom peptides from Orancistrocerus drewseni (Hymenoptera: Eumenidae).</title>
        <authorList>
            <person name="Baek J.H."/>
            <person name="Lee S.H."/>
        </authorList>
    </citation>
    <scope>NUCLEOTIDE SEQUENCE [MRNA]</scope>
    <scope>FUNCTION</scope>
    <scope>SUBCELLULAR LOCATION</scope>
    <scope>MASS SPECTROMETRY</scope>
    <scope>AMIDATION AT LEU-65</scope>
    <source>
        <tissue>Venom</tissue>
        <tissue>Venom gland</tissue>
    </source>
</reference>
<reference key="2">
    <citation type="journal article" date="2011" name="Peptides">
        <title>Venom peptides from solitary hunting wasps induce feeding disorder in lepidopteran larvae.</title>
        <authorList>
            <person name="Baek J.H."/>
            <person name="Ji Y."/>
            <person name="Shin J.S."/>
            <person name="Lee S."/>
            <person name="Lee S.H."/>
        </authorList>
    </citation>
    <scope>FUNCTION</scope>
    <scope>BIOASSAY</scope>
    <scope>SYNTHESIS OF 52-65</scope>
</reference>
<comment type="function">
    <text evidence="2 3">Antimicrobial peptide with strong activity against the fungi B.cinerea (MIC=5 uM) and C.albicans (MIC=33 uM), and no activity against the Gram-negative bacterium E.coli (MIC&gt;200 uM) and the Gram-positive bacterium S.aureus (MIC&gt;200 uM) (PubMed:19857508, PubMed:21184791). Shows cytolytic activity against insect cell lines (PubMed:21184791). Has no hemolytic activity against human erythrocytes (PubMed:21184791). In vivo, peptide injection in the vicinity of the head and thorax of lepidopteran larvae induces feeding disorder that lasts one or two days before recovering (PubMed:21184791).</text>
</comment>
<comment type="subcellular location">
    <subcellularLocation>
        <location evidence="2">Secreted</location>
    </subcellularLocation>
    <subcellularLocation>
        <location evidence="5">Target cell membrane</location>
    </subcellularLocation>
    <text evidence="7">Has an amphipathic alpha-helical conformation.</text>
</comment>
<comment type="tissue specificity">
    <text evidence="6">Expressed by the venom gland.</text>
</comment>
<comment type="mass spectrometry" mass="1506.87" method="MALDI" evidence="2"/>
<comment type="similarity">
    <text evidence="1">Belongs to the MCD family.</text>
</comment>
<name>VP3_ORADR</name>
<organism>
    <name type="scientific">Orancistrocerus drewseni</name>
    <name type="common">Solitary wasp</name>
    <dbReference type="NCBI Taxonomy" id="529024"/>
    <lineage>
        <taxon>Eukaryota</taxon>
        <taxon>Metazoa</taxon>
        <taxon>Ecdysozoa</taxon>
        <taxon>Arthropoda</taxon>
        <taxon>Hexapoda</taxon>
        <taxon>Insecta</taxon>
        <taxon>Pterygota</taxon>
        <taxon>Neoptera</taxon>
        <taxon>Endopterygota</taxon>
        <taxon>Hymenoptera</taxon>
        <taxon>Apocrita</taxon>
        <taxon>Aculeata</taxon>
        <taxon>Vespoidea</taxon>
        <taxon>Vespidae</taxon>
        <taxon>Eumeninae</taxon>
        <taxon>Orancistrocerus</taxon>
    </lineage>
</organism>